<keyword id="KW-0067">ATP-binding</keyword>
<keyword id="KW-1003">Cell membrane</keyword>
<keyword id="KW-0472">Membrane</keyword>
<keyword id="KW-0547">Nucleotide-binding</keyword>
<keyword id="KW-0592">Phosphate transport</keyword>
<keyword id="KW-1185">Reference proteome</keyword>
<keyword id="KW-1278">Translocase</keyword>
<keyword id="KW-0813">Transport</keyword>
<feature type="chain" id="PRO_0000272434" description="Phosphate import ATP-binding protein PstB">
    <location>
        <begin position="1"/>
        <end position="253"/>
    </location>
</feature>
<feature type="domain" description="ABC transporter" evidence="1">
    <location>
        <begin position="7"/>
        <end position="248"/>
    </location>
</feature>
<feature type="binding site" evidence="1">
    <location>
        <begin position="39"/>
        <end position="46"/>
    </location>
    <ligand>
        <name>ATP</name>
        <dbReference type="ChEBI" id="CHEBI:30616"/>
    </ligand>
</feature>
<organism>
    <name type="scientific">Carboxydothermus hydrogenoformans (strain ATCC BAA-161 / DSM 6008 / Z-2901)</name>
    <dbReference type="NCBI Taxonomy" id="246194"/>
    <lineage>
        <taxon>Bacteria</taxon>
        <taxon>Bacillati</taxon>
        <taxon>Bacillota</taxon>
        <taxon>Clostridia</taxon>
        <taxon>Thermoanaerobacterales</taxon>
        <taxon>Thermoanaerobacteraceae</taxon>
        <taxon>Carboxydothermus</taxon>
    </lineage>
</organism>
<accession>Q3AAA4</accession>
<protein>
    <recommendedName>
        <fullName evidence="1">Phosphate import ATP-binding protein PstB</fullName>
        <ecNumber evidence="1">7.3.2.1</ecNumber>
    </recommendedName>
    <alternativeName>
        <fullName evidence="1">ABC phosphate transporter</fullName>
    </alternativeName>
    <alternativeName>
        <fullName evidence="1">Phosphate-transporting ATPase</fullName>
    </alternativeName>
</protein>
<proteinExistence type="inferred from homology"/>
<gene>
    <name evidence="1" type="primary">pstB</name>
    <name type="ordered locus">CHY_2116</name>
</gene>
<name>PSTB_CARHZ</name>
<dbReference type="EC" id="7.3.2.1" evidence="1"/>
<dbReference type="EMBL" id="CP000141">
    <property type="protein sequence ID" value="ABB15333.1"/>
    <property type="molecule type" value="Genomic_DNA"/>
</dbReference>
<dbReference type="SMR" id="Q3AAA4"/>
<dbReference type="FunCoup" id="Q3AAA4">
    <property type="interactions" value="115"/>
</dbReference>
<dbReference type="STRING" id="246194.CHY_2116"/>
<dbReference type="KEGG" id="chy:CHY_2116"/>
<dbReference type="eggNOG" id="COG1117">
    <property type="taxonomic scope" value="Bacteria"/>
</dbReference>
<dbReference type="HOGENOM" id="CLU_000604_1_22_9"/>
<dbReference type="InParanoid" id="Q3AAA4"/>
<dbReference type="Proteomes" id="UP000002706">
    <property type="component" value="Chromosome"/>
</dbReference>
<dbReference type="GO" id="GO:0005886">
    <property type="term" value="C:plasma membrane"/>
    <property type="evidence" value="ECO:0007669"/>
    <property type="project" value="UniProtKB-SubCell"/>
</dbReference>
<dbReference type="GO" id="GO:0005524">
    <property type="term" value="F:ATP binding"/>
    <property type="evidence" value="ECO:0007669"/>
    <property type="project" value="UniProtKB-KW"/>
</dbReference>
<dbReference type="GO" id="GO:0016887">
    <property type="term" value="F:ATP hydrolysis activity"/>
    <property type="evidence" value="ECO:0007669"/>
    <property type="project" value="InterPro"/>
</dbReference>
<dbReference type="GO" id="GO:0015415">
    <property type="term" value="F:ATPase-coupled phosphate ion transmembrane transporter activity"/>
    <property type="evidence" value="ECO:0007669"/>
    <property type="project" value="UniProtKB-EC"/>
</dbReference>
<dbReference type="GO" id="GO:0035435">
    <property type="term" value="P:phosphate ion transmembrane transport"/>
    <property type="evidence" value="ECO:0007669"/>
    <property type="project" value="InterPro"/>
</dbReference>
<dbReference type="CDD" id="cd03260">
    <property type="entry name" value="ABC_PstB_phosphate_transporter"/>
    <property type="match status" value="1"/>
</dbReference>
<dbReference type="FunFam" id="3.40.50.300:FF:000132">
    <property type="entry name" value="Phosphate import ATP-binding protein PstB"/>
    <property type="match status" value="1"/>
</dbReference>
<dbReference type="Gene3D" id="3.40.50.300">
    <property type="entry name" value="P-loop containing nucleotide triphosphate hydrolases"/>
    <property type="match status" value="1"/>
</dbReference>
<dbReference type="InterPro" id="IPR003593">
    <property type="entry name" value="AAA+_ATPase"/>
</dbReference>
<dbReference type="InterPro" id="IPR003439">
    <property type="entry name" value="ABC_transporter-like_ATP-bd"/>
</dbReference>
<dbReference type="InterPro" id="IPR017871">
    <property type="entry name" value="ABC_transporter-like_CS"/>
</dbReference>
<dbReference type="InterPro" id="IPR027417">
    <property type="entry name" value="P-loop_NTPase"/>
</dbReference>
<dbReference type="InterPro" id="IPR005670">
    <property type="entry name" value="PstB-like"/>
</dbReference>
<dbReference type="NCBIfam" id="TIGR00972">
    <property type="entry name" value="3a0107s01c2"/>
    <property type="match status" value="1"/>
</dbReference>
<dbReference type="PANTHER" id="PTHR43423">
    <property type="entry name" value="ABC TRANSPORTER I FAMILY MEMBER 17"/>
    <property type="match status" value="1"/>
</dbReference>
<dbReference type="PANTHER" id="PTHR43423:SF1">
    <property type="entry name" value="ABC TRANSPORTER I FAMILY MEMBER 17"/>
    <property type="match status" value="1"/>
</dbReference>
<dbReference type="Pfam" id="PF00005">
    <property type="entry name" value="ABC_tran"/>
    <property type="match status" value="1"/>
</dbReference>
<dbReference type="SMART" id="SM00382">
    <property type="entry name" value="AAA"/>
    <property type="match status" value="1"/>
</dbReference>
<dbReference type="SUPFAM" id="SSF52540">
    <property type="entry name" value="P-loop containing nucleoside triphosphate hydrolases"/>
    <property type="match status" value="1"/>
</dbReference>
<dbReference type="PROSITE" id="PS00211">
    <property type="entry name" value="ABC_TRANSPORTER_1"/>
    <property type="match status" value="1"/>
</dbReference>
<dbReference type="PROSITE" id="PS50893">
    <property type="entry name" value="ABC_TRANSPORTER_2"/>
    <property type="match status" value="1"/>
</dbReference>
<dbReference type="PROSITE" id="PS51238">
    <property type="entry name" value="PSTB"/>
    <property type="match status" value="1"/>
</dbReference>
<comment type="function">
    <text evidence="1">Part of the ABC transporter complex PstSACB involved in phosphate import. Responsible for energy coupling to the transport system.</text>
</comment>
<comment type="catalytic activity">
    <reaction evidence="1">
        <text>phosphate(out) + ATP + H2O = ADP + 2 phosphate(in) + H(+)</text>
        <dbReference type="Rhea" id="RHEA:24440"/>
        <dbReference type="ChEBI" id="CHEBI:15377"/>
        <dbReference type="ChEBI" id="CHEBI:15378"/>
        <dbReference type="ChEBI" id="CHEBI:30616"/>
        <dbReference type="ChEBI" id="CHEBI:43474"/>
        <dbReference type="ChEBI" id="CHEBI:456216"/>
        <dbReference type="EC" id="7.3.2.1"/>
    </reaction>
</comment>
<comment type="subunit">
    <text evidence="1">The complex is composed of two ATP-binding proteins (PstB), two transmembrane proteins (PstC and PstA) and a solute-binding protein (PstS).</text>
</comment>
<comment type="subcellular location">
    <subcellularLocation>
        <location evidence="1">Cell membrane</location>
        <topology evidence="1">Peripheral membrane protein</topology>
    </subcellularLocation>
</comment>
<comment type="similarity">
    <text evidence="1">Belongs to the ABC transporter superfamily. Phosphate importer (TC 3.A.1.7) family.</text>
</comment>
<evidence type="ECO:0000255" key="1">
    <source>
        <dbReference type="HAMAP-Rule" id="MF_01702"/>
    </source>
</evidence>
<sequence>MLSDVKIKVRDLNLYYGNFQALKNISLDIYKNEVTALIGPSGCGKSTFLRTLNRMNDLIPGVRIEGSILFDGVDIYKENFDVVELRKRVGMVFQSPNPFPKSVYENVAYAPKIHGLKDKRKLDEIVEKSLRGAALWDEVKDRLHKPATGLSGGQQQRLCIARALAIEPEVLLMDEPTSALDPISTMRIEELIQELKKKYTIVIVTHNMQQAARISDRTAFFLNGELIEMDRTEVIFTKPRDRRTEDYITGRFG</sequence>
<reference key="1">
    <citation type="journal article" date="2005" name="PLoS Genet.">
        <title>Life in hot carbon monoxide: the complete genome sequence of Carboxydothermus hydrogenoformans Z-2901.</title>
        <authorList>
            <person name="Wu M."/>
            <person name="Ren Q."/>
            <person name="Durkin A.S."/>
            <person name="Daugherty S.C."/>
            <person name="Brinkac L.M."/>
            <person name="Dodson R.J."/>
            <person name="Madupu R."/>
            <person name="Sullivan S.A."/>
            <person name="Kolonay J.F."/>
            <person name="Nelson W.C."/>
            <person name="Tallon L.J."/>
            <person name="Jones K.M."/>
            <person name="Ulrich L.E."/>
            <person name="Gonzalez J.M."/>
            <person name="Zhulin I.B."/>
            <person name="Robb F.T."/>
            <person name="Eisen J.A."/>
        </authorList>
    </citation>
    <scope>NUCLEOTIDE SEQUENCE [LARGE SCALE GENOMIC DNA]</scope>
    <source>
        <strain>ATCC BAA-161 / DSM 6008 / Z-2901</strain>
    </source>
</reference>